<sequence length="261" mass="29898">MTHQTHAYHMVNPSPWPLTGALSALLMTSGLVMWFHYNSTLLLTLGLTTNLLTMYQWWRDIIRESTFQGHHTPAVQKGLRYGMILFIISEVFFFSGFFWAFYHSSLAPTPELGGCWPPTGIHPLNPMEVPLLNTSVLLASGVSITWAHHSLMEGNRKHMLQALFITISLGIYFTLLQASEYYEAPFTISDGVYGSTFFVATGFHGLHVIIGSTFLIVCFLRQLKFHFTSNHHFGFEAAAWYWHFVDVVWLFLYVSIYWWGS</sequence>
<feature type="chain" id="PRO_0000183847" description="Cytochrome c oxidase subunit 3">
    <location>
        <begin position="1"/>
        <end position="261"/>
    </location>
</feature>
<feature type="topological domain" description="Mitochondrial matrix" evidence="1">
    <location>
        <begin position="1"/>
        <end position="15"/>
    </location>
</feature>
<feature type="transmembrane region" description="Helical; Name=I" evidence="1">
    <location>
        <begin position="16"/>
        <end position="34"/>
    </location>
</feature>
<feature type="topological domain" description="Mitochondrial intermembrane" evidence="1">
    <location>
        <begin position="35"/>
        <end position="40"/>
    </location>
</feature>
<feature type="transmembrane region" description="Helical; Name=II" evidence="1">
    <location>
        <begin position="41"/>
        <end position="66"/>
    </location>
</feature>
<feature type="topological domain" description="Mitochondrial matrix" evidence="1">
    <location>
        <begin position="67"/>
        <end position="72"/>
    </location>
</feature>
<feature type="transmembrane region" description="Helical; Name=III" evidence="1">
    <location>
        <begin position="73"/>
        <end position="105"/>
    </location>
</feature>
<feature type="topological domain" description="Mitochondrial intermembrane" evidence="1">
    <location>
        <begin position="106"/>
        <end position="128"/>
    </location>
</feature>
<feature type="transmembrane region" description="Helical; Name=IV" evidence="1">
    <location>
        <begin position="129"/>
        <end position="152"/>
    </location>
</feature>
<feature type="topological domain" description="Mitochondrial matrix" evidence="1">
    <location>
        <begin position="153"/>
        <end position="155"/>
    </location>
</feature>
<feature type="transmembrane region" description="Helical; Name=V" evidence="1">
    <location>
        <begin position="156"/>
        <end position="183"/>
    </location>
</feature>
<feature type="topological domain" description="Mitochondrial intermembrane" evidence="1">
    <location>
        <begin position="184"/>
        <end position="190"/>
    </location>
</feature>
<feature type="transmembrane region" description="Helical; Name=VI" evidence="1">
    <location>
        <begin position="191"/>
        <end position="223"/>
    </location>
</feature>
<feature type="topological domain" description="Mitochondrial matrix" evidence="1">
    <location>
        <begin position="224"/>
        <end position="232"/>
    </location>
</feature>
<feature type="transmembrane region" description="Helical; Name=VII" evidence="1">
    <location>
        <begin position="233"/>
        <end position="256"/>
    </location>
</feature>
<feature type="topological domain" description="Mitochondrial intermembrane" evidence="1">
    <location>
        <begin position="257"/>
        <end position="261"/>
    </location>
</feature>
<dbReference type="EC" id="7.1.1.9"/>
<dbReference type="EMBL" id="X97336">
    <property type="protein sequence ID" value="CAA66007.1"/>
    <property type="molecule type" value="Genomic_DNA"/>
</dbReference>
<dbReference type="PIR" id="T11253">
    <property type="entry name" value="T11253"/>
</dbReference>
<dbReference type="SMR" id="Q96065"/>
<dbReference type="CTD" id="4514"/>
<dbReference type="GO" id="GO:0005743">
    <property type="term" value="C:mitochondrial inner membrane"/>
    <property type="evidence" value="ECO:0007669"/>
    <property type="project" value="UniProtKB-SubCell"/>
</dbReference>
<dbReference type="GO" id="GO:0045277">
    <property type="term" value="C:respiratory chain complex IV"/>
    <property type="evidence" value="ECO:0000250"/>
    <property type="project" value="UniProtKB"/>
</dbReference>
<dbReference type="GO" id="GO:0004129">
    <property type="term" value="F:cytochrome-c oxidase activity"/>
    <property type="evidence" value="ECO:0007669"/>
    <property type="project" value="UniProtKB-EC"/>
</dbReference>
<dbReference type="GO" id="GO:0006123">
    <property type="term" value="P:mitochondrial electron transport, cytochrome c to oxygen"/>
    <property type="evidence" value="ECO:0007669"/>
    <property type="project" value="TreeGrafter"/>
</dbReference>
<dbReference type="GO" id="GO:0008535">
    <property type="term" value="P:respiratory chain complex IV assembly"/>
    <property type="evidence" value="ECO:0000250"/>
    <property type="project" value="UniProtKB"/>
</dbReference>
<dbReference type="CDD" id="cd01665">
    <property type="entry name" value="Cyt_c_Oxidase_III"/>
    <property type="match status" value="1"/>
</dbReference>
<dbReference type="FunFam" id="1.10.287.70:FF:000048">
    <property type="entry name" value="Cytochrome c oxidase subunit 3"/>
    <property type="match status" value="1"/>
</dbReference>
<dbReference type="FunFam" id="1.20.120.80:FF:000002">
    <property type="entry name" value="Cytochrome c oxidase subunit 3"/>
    <property type="match status" value="1"/>
</dbReference>
<dbReference type="Gene3D" id="1.10.287.70">
    <property type="match status" value="1"/>
</dbReference>
<dbReference type="Gene3D" id="1.20.120.80">
    <property type="entry name" value="Cytochrome c oxidase, subunit III, four-helix bundle"/>
    <property type="match status" value="1"/>
</dbReference>
<dbReference type="InterPro" id="IPR024791">
    <property type="entry name" value="Cyt_c/ubiquinol_Oxase_su3"/>
</dbReference>
<dbReference type="InterPro" id="IPR033945">
    <property type="entry name" value="Cyt_c_oxase_su3_dom"/>
</dbReference>
<dbReference type="InterPro" id="IPR000298">
    <property type="entry name" value="Cyt_c_oxidase-like_su3"/>
</dbReference>
<dbReference type="InterPro" id="IPR035973">
    <property type="entry name" value="Cyt_c_oxidase_su3-like_sf"/>
</dbReference>
<dbReference type="InterPro" id="IPR013833">
    <property type="entry name" value="Cyt_c_oxidase_su3_a-hlx"/>
</dbReference>
<dbReference type="PANTHER" id="PTHR11403:SF7">
    <property type="entry name" value="CYTOCHROME C OXIDASE SUBUNIT 3"/>
    <property type="match status" value="1"/>
</dbReference>
<dbReference type="PANTHER" id="PTHR11403">
    <property type="entry name" value="CYTOCHROME C OXIDASE SUBUNIT III"/>
    <property type="match status" value="1"/>
</dbReference>
<dbReference type="Pfam" id="PF00510">
    <property type="entry name" value="COX3"/>
    <property type="match status" value="1"/>
</dbReference>
<dbReference type="SUPFAM" id="SSF81452">
    <property type="entry name" value="Cytochrome c oxidase subunit III-like"/>
    <property type="match status" value="1"/>
</dbReference>
<dbReference type="PROSITE" id="PS50253">
    <property type="entry name" value="COX3"/>
    <property type="match status" value="1"/>
</dbReference>
<proteinExistence type="inferred from homology"/>
<geneLocation type="mitochondrion"/>
<keyword id="KW-0472">Membrane</keyword>
<keyword id="KW-0496">Mitochondrion</keyword>
<keyword id="KW-0999">Mitochondrion inner membrane</keyword>
<keyword id="KW-1278">Translocase</keyword>
<keyword id="KW-0812">Transmembrane</keyword>
<keyword id="KW-1133">Transmembrane helix</keyword>
<gene>
    <name type="primary">MT-CO3</name>
    <name type="synonym">COIII</name>
    <name type="synonym">COXIII</name>
    <name type="synonym">MTCO3</name>
</gene>
<name>COX3_RHIUN</name>
<protein>
    <recommendedName>
        <fullName>Cytochrome c oxidase subunit 3</fullName>
        <ecNumber>7.1.1.9</ecNumber>
    </recommendedName>
    <alternativeName>
        <fullName>Cytochrome c oxidase polypeptide III</fullName>
    </alternativeName>
</protein>
<evidence type="ECO:0000250" key="1">
    <source>
        <dbReference type="UniProtKB" id="P00415"/>
    </source>
</evidence>
<evidence type="ECO:0000250" key="2">
    <source>
        <dbReference type="UniProtKB" id="P00420"/>
    </source>
</evidence>
<evidence type="ECO:0000305" key="3"/>
<comment type="function">
    <text evidence="2">Component of the cytochrome c oxidase, the last enzyme in the mitochondrial electron transport chain which drives oxidative phosphorylation. The respiratory chain contains 3 multisubunit complexes succinate dehydrogenase (complex II, CII), ubiquinol-cytochrome c oxidoreductase (cytochrome b-c1 complex, complex III, CIII) and cytochrome c oxidase (complex IV, CIV), that cooperate to transfer electrons derived from NADH and succinate to molecular oxygen, creating an electrochemical gradient over the inner membrane that drives transmembrane transport and the ATP synthase. Cytochrome c oxidase is the component of the respiratory chain that catalyzes the reduction of oxygen to water. Electrons originating from reduced cytochrome c in the intermembrane space (IMS) are transferred via the dinuclear copper A center (CU(A)) of subunit 2 and heme A of subunit 1 to the active site in subunit 1, a binuclear center (BNC) formed by heme A3 and copper B (CU(B)). The BNC reduces molecular oxygen to 2 water molecules using 4 electrons from cytochrome c in the IMS and 4 protons from the mitochondrial matrix.</text>
</comment>
<comment type="catalytic activity">
    <reaction evidence="2">
        <text>4 Fe(II)-[cytochrome c] + O2 + 8 H(+)(in) = 4 Fe(III)-[cytochrome c] + 2 H2O + 4 H(+)(out)</text>
        <dbReference type="Rhea" id="RHEA:11436"/>
        <dbReference type="Rhea" id="RHEA-COMP:10350"/>
        <dbReference type="Rhea" id="RHEA-COMP:14399"/>
        <dbReference type="ChEBI" id="CHEBI:15377"/>
        <dbReference type="ChEBI" id="CHEBI:15378"/>
        <dbReference type="ChEBI" id="CHEBI:15379"/>
        <dbReference type="ChEBI" id="CHEBI:29033"/>
        <dbReference type="ChEBI" id="CHEBI:29034"/>
        <dbReference type="EC" id="7.1.1.9"/>
    </reaction>
    <physiologicalReaction direction="left-to-right" evidence="2">
        <dbReference type="Rhea" id="RHEA:11437"/>
    </physiologicalReaction>
</comment>
<comment type="subunit">
    <text evidence="1">Component of the cytochrome c oxidase (complex IV, CIV), a multisubunit enzyme composed of 14 subunits. The complex is composed of a catalytic core of 3 subunits MT-CO1, MT-CO2 and MT-CO3, encoded in the mitochondrial DNA, and 11 supernumerary subunits COX4I, COX5A, COX5B, COX6A, COX6B, COX6C, COX7A, COX7B, COX7C, COX8 and NDUFA4, which are encoded in the nuclear genome. The complex exists as a monomer or a dimer and forms supercomplexes (SCs) in the inner mitochondrial membrane with NADH-ubiquinone oxidoreductase (complex I, CI) and ubiquinol-cytochrome c oxidoreductase (cytochrome b-c1 complex, complex III, CIII), resulting in different assemblies (supercomplex SCI(1)III(2)IV(1) and megacomplex MCI(2)III(2)IV(2)).</text>
</comment>
<comment type="subcellular location">
    <subcellularLocation>
        <location evidence="1">Mitochondrion inner membrane</location>
        <topology evidence="1">Multi-pass membrane protein</topology>
    </subcellularLocation>
</comment>
<comment type="similarity">
    <text evidence="3">Belongs to the cytochrome c oxidase subunit 3 family.</text>
</comment>
<organism>
    <name type="scientific">Rhinoceros unicornis</name>
    <name type="common">Greater Indian rhinoceros</name>
    <dbReference type="NCBI Taxonomy" id="9809"/>
    <lineage>
        <taxon>Eukaryota</taxon>
        <taxon>Metazoa</taxon>
        <taxon>Chordata</taxon>
        <taxon>Craniata</taxon>
        <taxon>Vertebrata</taxon>
        <taxon>Euteleostomi</taxon>
        <taxon>Mammalia</taxon>
        <taxon>Eutheria</taxon>
        <taxon>Laurasiatheria</taxon>
        <taxon>Perissodactyla</taxon>
        <taxon>Rhinocerotidae</taxon>
        <taxon>Rhinoceros</taxon>
    </lineage>
</organism>
<accession>Q96065</accession>
<reference key="1">
    <citation type="journal article" date="1996" name="Mol. Biol. Evol.">
        <title>The complete mitochondrial DNA sequence of the greater Indian rhinoceros, Rhinoceros unicornis, and the Phylogenetic relationship among Carnivora, Perissodactyla, and Artiodactyla (+ Cetacea).</title>
        <authorList>
            <person name="Xu X."/>
            <person name="Janke A."/>
            <person name="Arnason U."/>
        </authorList>
    </citation>
    <scope>NUCLEOTIDE SEQUENCE [GENOMIC DNA]</scope>
    <source>
        <tissue>Kidney</tissue>
    </source>
</reference>